<organism>
    <name type="scientific">Elusimicrobium minutum (strain Pei191)</name>
    <dbReference type="NCBI Taxonomy" id="445932"/>
    <lineage>
        <taxon>Bacteria</taxon>
        <taxon>Pseudomonadati</taxon>
        <taxon>Elusimicrobiota</taxon>
        <taxon>Elusimicrobia</taxon>
        <taxon>Elusimicrobiales</taxon>
        <taxon>Elusimicrobiaceae</taxon>
        <taxon>Elusimicrobium</taxon>
    </lineage>
</organism>
<feature type="chain" id="PRO_1000095210" description="Aspartyl/glutamyl-tRNA(Asn/Gln) amidotransferase subunit B">
    <location>
        <begin position="1"/>
        <end position="472"/>
    </location>
</feature>
<protein>
    <recommendedName>
        <fullName evidence="1">Aspartyl/glutamyl-tRNA(Asn/Gln) amidotransferase subunit B</fullName>
        <shortName evidence="1">Asp/Glu-ADT subunit B</shortName>
        <ecNumber evidence="1">6.3.5.-</ecNumber>
    </recommendedName>
</protein>
<reference key="1">
    <citation type="journal article" date="2009" name="Appl. Environ. Microbiol.">
        <title>Genomic analysis of 'Elusimicrobium minutum,' the first cultivated representative of the phylum 'Elusimicrobia' (formerly termite group 1).</title>
        <authorList>
            <person name="Herlemann D.P.R."/>
            <person name="Geissinger O."/>
            <person name="Ikeda-Ohtsubo W."/>
            <person name="Kunin V."/>
            <person name="Sun H."/>
            <person name="Lapidus A."/>
            <person name="Hugenholtz P."/>
            <person name="Brune A."/>
        </authorList>
    </citation>
    <scope>NUCLEOTIDE SEQUENCE [LARGE SCALE GENOMIC DNA]</scope>
    <source>
        <strain>Pei191</strain>
    </source>
</reference>
<accession>B2KE80</accession>
<gene>
    <name evidence="1" type="primary">gatB</name>
    <name type="ordered locus">Emin_1276</name>
</gene>
<evidence type="ECO:0000255" key="1">
    <source>
        <dbReference type="HAMAP-Rule" id="MF_00121"/>
    </source>
</evidence>
<sequence>MTQFEPVIGLEIHLQLNTNSKLFCSCPSGMADNPIPNSAVCPVCTAQPGTLPVLNKGAVELAVKAALALNLEINKISLFDRKNYFYPDLPKGYQITQLFKPISEHGWLEVNGRKVGITRAHMEEDAGKSIHHASYSLIDWNRAGTPLLEIVSEPEIHSADEAYEFLTKLKSNVSWVGASNADMEKGELRVDVNISLRPAGIKTFGTKVEIKNLNSFKAVRDAINVEIERQTEMLNEGKKIKQETLLFDKEKGETVSMRSKEDALDYRYFPDPDLPPLVLADEWLESVIASRPEMPARRKERFTKDYGLSDYDAGVLTSERALSEYYEDTVKTGANPKNAANWITTDLLGAINAAKLDINDCPVTAKQLGTIVTLTDSGKISRAQAKKVFEQCWQTKKDPEVIVKELGLEQVSDENQLETWAKEAIAENPKIVSDVKSGNPKAIGALIGSVMKKSKGKANPGKMNEIFAKLLQ</sequence>
<name>GATB_ELUMP</name>
<comment type="function">
    <text evidence="1">Allows the formation of correctly charged Asn-tRNA(Asn) or Gln-tRNA(Gln) through the transamidation of misacylated Asp-tRNA(Asn) or Glu-tRNA(Gln) in organisms which lack either or both of asparaginyl-tRNA or glutaminyl-tRNA synthetases. The reaction takes place in the presence of glutamine and ATP through an activated phospho-Asp-tRNA(Asn) or phospho-Glu-tRNA(Gln).</text>
</comment>
<comment type="catalytic activity">
    <reaction evidence="1">
        <text>L-glutamyl-tRNA(Gln) + L-glutamine + ATP + H2O = L-glutaminyl-tRNA(Gln) + L-glutamate + ADP + phosphate + H(+)</text>
        <dbReference type="Rhea" id="RHEA:17521"/>
        <dbReference type="Rhea" id="RHEA-COMP:9681"/>
        <dbReference type="Rhea" id="RHEA-COMP:9684"/>
        <dbReference type="ChEBI" id="CHEBI:15377"/>
        <dbReference type="ChEBI" id="CHEBI:15378"/>
        <dbReference type="ChEBI" id="CHEBI:29985"/>
        <dbReference type="ChEBI" id="CHEBI:30616"/>
        <dbReference type="ChEBI" id="CHEBI:43474"/>
        <dbReference type="ChEBI" id="CHEBI:58359"/>
        <dbReference type="ChEBI" id="CHEBI:78520"/>
        <dbReference type="ChEBI" id="CHEBI:78521"/>
        <dbReference type="ChEBI" id="CHEBI:456216"/>
    </reaction>
</comment>
<comment type="catalytic activity">
    <reaction evidence="1">
        <text>L-aspartyl-tRNA(Asn) + L-glutamine + ATP + H2O = L-asparaginyl-tRNA(Asn) + L-glutamate + ADP + phosphate + 2 H(+)</text>
        <dbReference type="Rhea" id="RHEA:14513"/>
        <dbReference type="Rhea" id="RHEA-COMP:9674"/>
        <dbReference type="Rhea" id="RHEA-COMP:9677"/>
        <dbReference type="ChEBI" id="CHEBI:15377"/>
        <dbReference type="ChEBI" id="CHEBI:15378"/>
        <dbReference type="ChEBI" id="CHEBI:29985"/>
        <dbReference type="ChEBI" id="CHEBI:30616"/>
        <dbReference type="ChEBI" id="CHEBI:43474"/>
        <dbReference type="ChEBI" id="CHEBI:58359"/>
        <dbReference type="ChEBI" id="CHEBI:78515"/>
        <dbReference type="ChEBI" id="CHEBI:78516"/>
        <dbReference type="ChEBI" id="CHEBI:456216"/>
    </reaction>
</comment>
<comment type="subunit">
    <text evidence="1">Heterotrimer of A, B and C subunits.</text>
</comment>
<comment type="similarity">
    <text evidence="1">Belongs to the GatB/GatE family. GatB subfamily.</text>
</comment>
<dbReference type="EC" id="6.3.5.-" evidence="1"/>
<dbReference type="EMBL" id="CP001055">
    <property type="protein sequence ID" value="ACC98826.1"/>
    <property type="molecule type" value="Genomic_DNA"/>
</dbReference>
<dbReference type="RefSeq" id="WP_012415441.1">
    <property type="nucleotide sequence ID" value="NC_010644.1"/>
</dbReference>
<dbReference type="SMR" id="B2KE80"/>
<dbReference type="STRING" id="445932.Emin_1276"/>
<dbReference type="KEGG" id="emi:Emin_1276"/>
<dbReference type="HOGENOM" id="CLU_019240_0_0_0"/>
<dbReference type="OrthoDB" id="9804078at2"/>
<dbReference type="Proteomes" id="UP000001029">
    <property type="component" value="Chromosome"/>
</dbReference>
<dbReference type="GO" id="GO:0050566">
    <property type="term" value="F:asparaginyl-tRNA synthase (glutamine-hydrolyzing) activity"/>
    <property type="evidence" value="ECO:0007669"/>
    <property type="project" value="RHEA"/>
</dbReference>
<dbReference type="GO" id="GO:0005524">
    <property type="term" value="F:ATP binding"/>
    <property type="evidence" value="ECO:0007669"/>
    <property type="project" value="UniProtKB-KW"/>
</dbReference>
<dbReference type="GO" id="GO:0050567">
    <property type="term" value="F:glutaminyl-tRNA synthase (glutamine-hydrolyzing) activity"/>
    <property type="evidence" value="ECO:0007669"/>
    <property type="project" value="UniProtKB-UniRule"/>
</dbReference>
<dbReference type="GO" id="GO:0006412">
    <property type="term" value="P:translation"/>
    <property type="evidence" value="ECO:0007669"/>
    <property type="project" value="UniProtKB-UniRule"/>
</dbReference>
<dbReference type="FunFam" id="1.10.10.410:FF:000001">
    <property type="entry name" value="Aspartyl/glutamyl-tRNA(Asn/Gln) amidotransferase subunit B"/>
    <property type="match status" value="1"/>
</dbReference>
<dbReference type="FunFam" id="1.10.150.380:FF:000001">
    <property type="entry name" value="Aspartyl/glutamyl-tRNA(Asn/Gln) amidotransferase subunit B"/>
    <property type="match status" value="1"/>
</dbReference>
<dbReference type="Gene3D" id="1.10.10.410">
    <property type="match status" value="1"/>
</dbReference>
<dbReference type="Gene3D" id="1.10.150.380">
    <property type="entry name" value="GatB domain, N-terminal subdomain"/>
    <property type="match status" value="1"/>
</dbReference>
<dbReference type="HAMAP" id="MF_00121">
    <property type="entry name" value="GatB"/>
    <property type="match status" value="1"/>
</dbReference>
<dbReference type="InterPro" id="IPR017959">
    <property type="entry name" value="Asn/Gln-tRNA_amidoTrfase_suB/E"/>
</dbReference>
<dbReference type="InterPro" id="IPR006075">
    <property type="entry name" value="Asn/Gln-tRNA_Trfase_suB/E_cat"/>
</dbReference>
<dbReference type="InterPro" id="IPR018027">
    <property type="entry name" value="Asn/Gln_amidotransferase"/>
</dbReference>
<dbReference type="InterPro" id="IPR003789">
    <property type="entry name" value="Asn/Gln_tRNA_amidoTrase-B-like"/>
</dbReference>
<dbReference type="InterPro" id="IPR004413">
    <property type="entry name" value="GatB"/>
</dbReference>
<dbReference type="InterPro" id="IPR042114">
    <property type="entry name" value="GatB_C_1"/>
</dbReference>
<dbReference type="InterPro" id="IPR023168">
    <property type="entry name" value="GatB_Yqey_C_2"/>
</dbReference>
<dbReference type="InterPro" id="IPR014746">
    <property type="entry name" value="Gln_synth/guanido_kin_cat_dom"/>
</dbReference>
<dbReference type="NCBIfam" id="TIGR00133">
    <property type="entry name" value="gatB"/>
    <property type="match status" value="1"/>
</dbReference>
<dbReference type="NCBIfam" id="NF004012">
    <property type="entry name" value="PRK05477.1-2"/>
    <property type="match status" value="1"/>
</dbReference>
<dbReference type="NCBIfam" id="NF004014">
    <property type="entry name" value="PRK05477.1-4"/>
    <property type="match status" value="1"/>
</dbReference>
<dbReference type="PANTHER" id="PTHR11659">
    <property type="entry name" value="GLUTAMYL-TRNA GLN AMIDOTRANSFERASE SUBUNIT B MITOCHONDRIAL AND PROKARYOTIC PET112-RELATED"/>
    <property type="match status" value="1"/>
</dbReference>
<dbReference type="Pfam" id="PF02934">
    <property type="entry name" value="GatB_N"/>
    <property type="match status" value="1"/>
</dbReference>
<dbReference type="Pfam" id="PF02637">
    <property type="entry name" value="GatB_Yqey"/>
    <property type="match status" value="1"/>
</dbReference>
<dbReference type="SMART" id="SM00845">
    <property type="entry name" value="GatB_Yqey"/>
    <property type="match status" value="1"/>
</dbReference>
<dbReference type="SUPFAM" id="SSF89095">
    <property type="entry name" value="GatB/YqeY motif"/>
    <property type="match status" value="1"/>
</dbReference>
<dbReference type="SUPFAM" id="SSF55931">
    <property type="entry name" value="Glutamine synthetase/guanido kinase"/>
    <property type="match status" value="1"/>
</dbReference>
<proteinExistence type="inferred from homology"/>
<keyword id="KW-0067">ATP-binding</keyword>
<keyword id="KW-0436">Ligase</keyword>
<keyword id="KW-0547">Nucleotide-binding</keyword>
<keyword id="KW-0648">Protein biosynthesis</keyword>
<keyword id="KW-1185">Reference proteome</keyword>